<dbReference type="EMBL" id="CR380959">
    <property type="protein sequence ID" value="CAG62446.1"/>
    <property type="molecule type" value="Genomic_DNA"/>
</dbReference>
<dbReference type="RefSeq" id="XP_449470.1">
    <property type="nucleotide sequence ID" value="XM_449470.1"/>
</dbReference>
<dbReference type="SMR" id="Q6FJX4"/>
<dbReference type="FunCoup" id="Q6FJX4">
    <property type="interactions" value="1464"/>
</dbReference>
<dbReference type="STRING" id="284593.Q6FJX4"/>
<dbReference type="EnsemblFungi" id="CAGL0M02849g-T">
    <property type="protein sequence ID" value="CAGL0M02849g-T-p1"/>
    <property type="gene ID" value="CAGL0M02849g"/>
</dbReference>
<dbReference type="KEGG" id="cgr:2891478"/>
<dbReference type="CGD" id="CAL0136455">
    <property type="gene designation" value="CAGL0M02849g"/>
</dbReference>
<dbReference type="VEuPathDB" id="FungiDB:B1J91_M02849g"/>
<dbReference type="VEuPathDB" id="FungiDB:CAGL0M02849g"/>
<dbReference type="eggNOG" id="KOG0830">
    <property type="taxonomic scope" value="Eukaryota"/>
</dbReference>
<dbReference type="HOGENOM" id="CLU_058171_2_0_1"/>
<dbReference type="InParanoid" id="Q6FJX4"/>
<dbReference type="OMA" id="VKNFFEP"/>
<dbReference type="Proteomes" id="UP000002428">
    <property type="component" value="Chromosome M"/>
</dbReference>
<dbReference type="GO" id="GO:0022627">
    <property type="term" value="C:cytosolic small ribosomal subunit"/>
    <property type="evidence" value="ECO:0007669"/>
    <property type="project" value="UniProtKB-UniRule"/>
</dbReference>
<dbReference type="GO" id="GO:0003735">
    <property type="term" value="F:structural constituent of ribosome"/>
    <property type="evidence" value="ECO:0007669"/>
    <property type="project" value="UniProtKB-UniRule"/>
</dbReference>
<dbReference type="GO" id="GO:0000028">
    <property type="term" value="P:ribosomal small subunit assembly"/>
    <property type="evidence" value="ECO:0007669"/>
    <property type="project" value="UniProtKB-UniRule"/>
</dbReference>
<dbReference type="GO" id="GO:0006412">
    <property type="term" value="P:translation"/>
    <property type="evidence" value="ECO:0007669"/>
    <property type="project" value="UniProtKB-UniRule"/>
</dbReference>
<dbReference type="CDD" id="cd01425">
    <property type="entry name" value="RPS2"/>
    <property type="match status" value="1"/>
</dbReference>
<dbReference type="FunFam" id="3.40.50.10490:FF:000010">
    <property type="entry name" value="40S ribosomal protein S0"/>
    <property type="match status" value="1"/>
</dbReference>
<dbReference type="Gene3D" id="3.40.50.10490">
    <property type="entry name" value="Glucose-6-phosphate isomerase like protein, domain 1"/>
    <property type="match status" value="1"/>
</dbReference>
<dbReference type="HAMAP" id="MF_03015">
    <property type="entry name" value="Ribosomal_S2_euk"/>
    <property type="match status" value="1"/>
</dbReference>
<dbReference type="InterPro" id="IPR001865">
    <property type="entry name" value="Ribosomal_uS2"/>
</dbReference>
<dbReference type="InterPro" id="IPR018130">
    <property type="entry name" value="Ribosomal_uS2_CS"/>
</dbReference>
<dbReference type="InterPro" id="IPR027498">
    <property type="entry name" value="Ribosomal_uS2_euk"/>
</dbReference>
<dbReference type="InterPro" id="IPR005707">
    <property type="entry name" value="Ribosomal_uS2_euk/arc"/>
</dbReference>
<dbReference type="InterPro" id="IPR023591">
    <property type="entry name" value="Ribosomal_uS2_flav_dom_sf"/>
</dbReference>
<dbReference type="NCBIfam" id="TIGR01012">
    <property type="entry name" value="uS2_euk_arch"/>
    <property type="match status" value="1"/>
</dbReference>
<dbReference type="PANTHER" id="PTHR11489">
    <property type="entry name" value="40S RIBOSOMAL PROTEIN SA"/>
    <property type="match status" value="1"/>
</dbReference>
<dbReference type="Pfam" id="PF00318">
    <property type="entry name" value="Ribosomal_S2"/>
    <property type="match status" value="2"/>
</dbReference>
<dbReference type="PRINTS" id="PR00395">
    <property type="entry name" value="RIBOSOMALS2"/>
</dbReference>
<dbReference type="SUPFAM" id="SSF52313">
    <property type="entry name" value="Ribosomal protein S2"/>
    <property type="match status" value="1"/>
</dbReference>
<dbReference type="PROSITE" id="PS00962">
    <property type="entry name" value="RIBOSOMAL_S2_1"/>
    <property type="match status" value="1"/>
</dbReference>
<dbReference type="PROSITE" id="PS00963">
    <property type="entry name" value="RIBOSOMAL_S2_2"/>
    <property type="match status" value="1"/>
</dbReference>
<proteinExistence type="inferred from homology"/>
<comment type="function">
    <text evidence="1">Required for the assembly and/or stability of the 40S ribosomal subunit. Required for the processing of the 20S rRNA-precursor to mature 18S rRNA in a late step of the maturation of 40S ribosomal subunits.</text>
</comment>
<comment type="subunit">
    <text evidence="1">Component of the small ribosomal subunit. Mature ribosomes consist of a small (40S) and a large (60S) subunit. The 40S subunit contains about 33 different proteins and 1 molecule of RNA (18S). The 60S subunit contains about 49 different proteins and 3 molecules of RNA (25S, 5.8S and 5S). Interacts with RPS21.</text>
</comment>
<comment type="subcellular location">
    <subcellularLocation>
        <location evidence="1">Cytoplasm</location>
    </subcellularLocation>
</comment>
<comment type="similarity">
    <text evidence="1">Belongs to the universal ribosomal protein uS2 family.</text>
</comment>
<name>RSSA_CANGA</name>
<accession>Q6FJX4</accession>
<feature type="initiator methionine" description="Removed" evidence="1">
    <location>
        <position position="1"/>
    </location>
</feature>
<feature type="chain" id="PRO_0000371625" description="Small ribosomal subunit protein uS2">
    <location>
        <begin position="2"/>
        <end position="251"/>
    </location>
</feature>
<feature type="region of interest" description="Disordered" evidence="2">
    <location>
        <begin position="209"/>
        <end position="251"/>
    </location>
</feature>
<feature type="compositionally biased region" description="Acidic residues" evidence="2">
    <location>
        <begin position="218"/>
        <end position="237"/>
    </location>
</feature>
<feature type="compositionally biased region" description="Low complexity" evidence="2">
    <location>
        <begin position="238"/>
        <end position="251"/>
    </location>
</feature>
<feature type="modified residue" description="N-acetylserine" evidence="1">
    <location>
        <position position="2"/>
    </location>
</feature>
<sequence length="251" mass="27940">MSLPATFDLTPEDAQLLLAANTHLGARNVQVHQEPYVFNARPDGVHVINVGKTWEKLVLAARIIAAIPNPEDVVAISSRTYGQRAVLKFAAHTGATPIAGRFTPGSFTNYITRSFKEPRLVIVTDPRSDAQAIKEASYVNIPVIALTDLDSPSEYVDVAIPCNNRGKHSIGLIWYLLAREVLRLRGALTDRTQPWSIMPDLYFYRNPEEIEQQTAEEAAQEAGEEEAKEEVTEEQTEAAEWAQENADNVEW</sequence>
<protein>
    <recommendedName>
        <fullName evidence="1">Small ribosomal subunit protein uS2</fullName>
    </recommendedName>
    <alternativeName>
        <fullName evidence="3">40S ribosomal protein S0</fullName>
    </alternativeName>
</protein>
<organism>
    <name type="scientific">Candida glabrata (strain ATCC 2001 / BCRC 20586 / JCM 3761 / NBRC 0622 / NRRL Y-65 / CBS 138)</name>
    <name type="common">Yeast</name>
    <name type="synonym">Nakaseomyces glabratus</name>
    <dbReference type="NCBI Taxonomy" id="284593"/>
    <lineage>
        <taxon>Eukaryota</taxon>
        <taxon>Fungi</taxon>
        <taxon>Dikarya</taxon>
        <taxon>Ascomycota</taxon>
        <taxon>Saccharomycotina</taxon>
        <taxon>Saccharomycetes</taxon>
        <taxon>Saccharomycetales</taxon>
        <taxon>Saccharomycetaceae</taxon>
        <taxon>Nakaseomyces</taxon>
    </lineage>
</organism>
<evidence type="ECO:0000255" key="1">
    <source>
        <dbReference type="HAMAP-Rule" id="MF_03015"/>
    </source>
</evidence>
<evidence type="ECO:0000256" key="2">
    <source>
        <dbReference type="SAM" id="MobiDB-lite"/>
    </source>
</evidence>
<evidence type="ECO:0000305" key="3"/>
<keyword id="KW-0007">Acetylation</keyword>
<keyword id="KW-0963">Cytoplasm</keyword>
<keyword id="KW-1185">Reference proteome</keyword>
<keyword id="KW-0687">Ribonucleoprotein</keyword>
<keyword id="KW-0689">Ribosomal protein</keyword>
<gene>
    <name evidence="1" type="primary">RPS0</name>
    <name type="ordered locus">CAGL0M02849g</name>
</gene>
<reference key="1">
    <citation type="journal article" date="2004" name="Nature">
        <title>Genome evolution in yeasts.</title>
        <authorList>
            <person name="Dujon B."/>
            <person name="Sherman D."/>
            <person name="Fischer G."/>
            <person name="Durrens P."/>
            <person name="Casaregola S."/>
            <person name="Lafontaine I."/>
            <person name="de Montigny J."/>
            <person name="Marck C."/>
            <person name="Neuveglise C."/>
            <person name="Talla E."/>
            <person name="Goffard N."/>
            <person name="Frangeul L."/>
            <person name="Aigle M."/>
            <person name="Anthouard V."/>
            <person name="Babour A."/>
            <person name="Barbe V."/>
            <person name="Barnay S."/>
            <person name="Blanchin S."/>
            <person name="Beckerich J.-M."/>
            <person name="Beyne E."/>
            <person name="Bleykasten C."/>
            <person name="Boisrame A."/>
            <person name="Boyer J."/>
            <person name="Cattolico L."/>
            <person name="Confanioleri F."/>
            <person name="de Daruvar A."/>
            <person name="Despons L."/>
            <person name="Fabre E."/>
            <person name="Fairhead C."/>
            <person name="Ferry-Dumazet H."/>
            <person name="Groppi A."/>
            <person name="Hantraye F."/>
            <person name="Hennequin C."/>
            <person name="Jauniaux N."/>
            <person name="Joyet P."/>
            <person name="Kachouri R."/>
            <person name="Kerrest A."/>
            <person name="Koszul R."/>
            <person name="Lemaire M."/>
            <person name="Lesur I."/>
            <person name="Ma L."/>
            <person name="Muller H."/>
            <person name="Nicaud J.-M."/>
            <person name="Nikolski M."/>
            <person name="Oztas S."/>
            <person name="Ozier-Kalogeropoulos O."/>
            <person name="Pellenz S."/>
            <person name="Potier S."/>
            <person name="Richard G.-F."/>
            <person name="Straub M.-L."/>
            <person name="Suleau A."/>
            <person name="Swennen D."/>
            <person name="Tekaia F."/>
            <person name="Wesolowski-Louvel M."/>
            <person name="Westhof E."/>
            <person name="Wirth B."/>
            <person name="Zeniou-Meyer M."/>
            <person name="Zivanovic Y."/>
            <person name="Bolotin-Fukuhara M."/>
            <person name="Thierry A."/>
            <person name="Bouchier C."/>
            <person name="Caudron B."/>
            <person name="Scarpelli C."/>
            <person name="Gaillardin C."/>
            <person name="Weissenbach J."/>
            <person name="Wincker P."/>
            <person name="Souciet J.-L."/>
        </authorList>
    </citation>
    <scope>NUCLEOTIDE SEQUENCE [LARGE SCALE GENOMIC DNA]</scope>
    <source>
        <strain>ATCC 2001 / BCRC 20586 / JCM 3761 / NBRC 0622 / NRRL Y-65 / CBS 138</strain>
    </source>
</reference>